<proteinExistence type="evidence at protein level"/>
<accession>P0DOW6</accession>
<dbReference type="GO" id="GO:0005576">
    <property type="term" value="C:extracellular region"/>
    <property type="evidence" value="ECO:0007669"/>
    <property type="project" value="UniProtKB-SubCell"/>
</dbReference>
<dbReference type="GO" id="GO:0005246">
    <property type="term" value="F:calcium channel regulator activity"/>
    <property type="evidence" value="ECO:0007669"/>
    <property type="project" value="UniProtKB-KW"/>
</dbReference>
<dbReference type="GO" id="GO:0090729">
    <property type="term" value="F:toxin activity"/>
    <property type="evidence" value="ECO:0007669"/>
    <property type="project" value="UniProtKB-KW"/>
</dbReference>
<protein>
    <recommendedName>
        <fullName evidence="4">Gamma-conotoxin PiVIIA</fullName>
    </recommendedName>
</protein>
<reference key="1">
    <citation type="journal article" date="2016" name="Toxins">
        <title>A new member of gamma-conotoxin family isolated from Conus princeps displays a novel molecular target.</title>
        <authorList>
            <person name="Bernaldez J."/>
            <person name="Jimenez S."/>
            <person name="Gonzalez L.J."/>
            <person name="Ferro J.N."/>
            <person name="Soto E."/>
            <person name="Salceda E."/>
            <person name="Chavez D."/>
            <person name="Aguilar M.B."/>
            <person name="Licea-Navarro A."/>
        </authorList>
    </citation>
    <scope>PROTEIN SEQUENCE</scope>
    <scope>MASS SPECTROMETRY</scope>
    <scope>HYDROXYLATION AT PRO-4</scope>
    <scope>GAMMA-CARBOXYGLUTAMATION AT GLU-13 AND GLU-20</scope>
    <scope>SUBCELLULAR LOCATION</scope>
    <source>
        <tissue>Venom</tissue>
    </source>
</reference>
<evidence type="ECO:0000250" key="1"/>
<evidence type="ECO:0000250" key="2">
    <source>
        <dbReference type="UniProtKB" id="P56711"/>
    </source>
</evidence>
<evidence type="ECO:0000269" key="3">
    <source>
    </source>
</evidence>
<evidence type="ECO:0000303" key="4">
    <source>
    </source>
</evidence>
<evidence type="ECO:0000305" key="5"/>
<organism>
    <name type="scientific">Conus princeps</name>
    <name type="common">Prince cone</name>
    <dbReference type="NCBI Taxonomy" id="101311"/>
    <lineage>
        <taxon>Eukaryota</taxon>
        <taxon>Metazoa</taxon>
        <taxon>Spiralia</taxon>
        <taxon>Lophotrochozoa</taxon>
        <taxon>Mollusca</taxon>
        <taxon>Gastropoda</taxon>
        <taxon>Caenogastropoda</taxon>
        <taxon>Neogastropoda</taxon>
        <taxon>Conoidea</taxon>
        <taxon>Conidae</taxon>
        <taxon>Conus</taxon>
        <taxon>Ductoconus</taxon>
    </lineage>
</organism>
<keyword id="KW-0108">Calcium channel impairing toxin</keyword>
<keyword id="KW-0903">Direct protein sequencing</keyword>
<keyword id="KW-1015">Disulfide bond</keyword>
<keyword id="KW-0301">Gamma-carboxyglutamic acid</keyword>
<keyword id="KW-0379">Hydroxylation</keyword>
<keyword id="KW-0872">Ion channel impairing toxin</keyword>
<keyword id="KW-0960">Knottin</keyword>
<keyword id="KW-0528">Neurotoxin</keyword>
<keyword id="KW-0964">Secreted</keyword>
<keyword id="KW-0800">Toxin</keyword>
<feature type="peptide" id="PRO_0000438813" description="Gamma-conotoxin PiVIIA" evidence="3">
    <location>
        <begin position="1"/>
        <end position="25"/>
    </location>
</feature>
<feature type="modified residue" description="4-hydroxyproline" evidence="3">
    <location>
        <position position="4"/>
    </location>
</feature>
<feature type="modified residue" description="4-carboxyglutamate" evidence="3">
    <location>
        <position position="13"/>
    </location>
</feature>
<feature type="modified residue" description="4-carboxyglutamate" evidence="3">
    <location>
        <position position="20"/>
    </location>
</feature>
<feature type="disulfide bond" evidence="1">
    <location>
        <begin position="1"/>
        <end position="15"/>
    </location>
</feature>
<feature type="disulfide bond" evidence="1">
    <location>
        <begin position="8"/>
        <end position="19"/>
    </location>
</feature>
<feature type="disulfide bond" evidence="1">
    <location>
        <begin position="14"/>
        <end position="24"/>
    </location>
</feature>
<name>O27A_CONPG</name>
<sequence>CDAPTHYCTNYWECCSGYCEHSHCW</sequence>
<comment type="function">
    <text evidence="2 3">Micromolar concentrations of PiVIIA increase the magnitude of the macroscopic calcium current in DRG neurons from rat. An increase, even modest of the calcium current, may have a significant impact in the excitability and electrical activity of neurons, and may set up PiVIIA as a member of the pharmacological family of the gamma-conotoxins.</text>
</comment>
<comment type="subcellular location">
    <subcellularLocation>
        <location evidence="3">Secreted</location>
    </subcellularLocation>
</comment>
<comment type="tissue specificity">
    <text evidence="5">Expressed by the venom duct.</text>
</comment>
<comment type="domain">
    <text evidence="1">The presence of a 'disulfide through disulfide knot' structurally defines this protein as a knottin.</text>
</comment>
<comment type="domain">
    <text evidence="5">The cysteine framework is VI/VII (C-C-CC-C-C).</text>
</comment>
<comment type="mass spectrometry">
    <text>Monoisotopic mass.</text>
</comment>
<comment type="miscellaneous">
    <text evidence="3">Negative results: does not modify sodium, potassium and acid sensing ionic channel (ASIC) currents.</text>
</comment>
<comment type="similarity">
    <text>Belongs to the conotoxin O2 superfamily.</text>
</comment>